<dbReference type="EMBL" id="AK036912">
    <property type="protein sequence ID" value="BAC29636.1"/>
    <property type="status" value="ALT_INIT"/>
    <property type="molecule type" value="mRNA"/>
</dbReference>
<dbReference type="EMBL" id="AK085144">
    <property type="protein sequence ID" value="BAC39374.1"/>
    <property type="molecule type" value="mRNA"/>
</dbReference>
<dbReference type="EMBL" id="BC023931">
    <property type="protein sequence ID" value="AAH23931.1"/>
    <property type="molecule type" value="mRNA"/>
</dbReference>
<dbReference type="EMBL" id="BC024805">
    <property type="protein sequence ID" value="AAH24805.1"/>
    <property type="molecule type" value="mRNA"/>
</dbReference>
<dbReference type="EMBL" id="AK220563">
    <property type="protein sequence ID" value="BAD90329.1"/>
    <property type="status" value="ALT_SEQ"/>
    <property type="molecule type" value="mRNA"/>
</dbReference>
<dbReference type="CCDS" id="CCDS40544.1"/>
<dbReference type="RefSeq" id="NP_001103779.1">
    <property type="nucleotide sequence ID" value="NM_001110309.1"/>
</dbReference>
<dbReference type="RefSeq" id="NP_001297671.1">
    <property type="nucleotide sequence ID" value="NM_001310742.1"/>
</dbReference>
<dbReference type="RefSeq" id="NP_666333.1">
    <property type="nucleotide sequence ID" value="NM_146221.4"/>
</dbReference>
<dbReference type="SMR" id="Q8R1D1"/>
<dbReference type="FunCoup" id="Q8R1D1">
    <property type="interactions" value="230"/>
</dbReference>
<dbReference type="STRING" id="10090.ENSMUSP00000111224"/>
<dbReference type="iPTMnet" id="Q8R1D1"/>
<dbReference type="PhosphoSitePlus" id="Q8R1D1"/>
<dbReference type="PaxDb" id="10090-ENSMUSP00000127045"/>
<dbReference type="ProteomicsDB" id="275015"/>
<dbReference type="Pumba" id="Q8R1D1"/>
<dbReference type="Antibodypedia" id="12609">
    <property type="antibodies" value="130 antibodies from 24 providers"/>
</dbReference>
<dbReference type="DNASU" id="235028"/>
<dbReference type="Ensembl" id="ENSMUST00000080386.13">
    <property type="protein sequence ID" value="ENSMUSP00000079250.7"/>
    <property type="gene ID" value="ENSMUSG00000059475.14"/>
</dbReference>
<dbReference type="Ensembl" id="ENSMUST00000115562.9">
    <property type="protein sequence ID" value="ENSMUSP00000111224.3"/>
    <property type="gene ID" value="ENSMUSG00000059475.14"/>
</dbReference>
<dbReference type="Ensembl" id="ENSMUST00000166005.8">
    <property type="protein sequence ID" value="ENSMUSP00000129727.2"/>
    <property type="gene ID" value="ENSMUSG00000059475.14"/>
</dbReference>
<dbReference type="GeneID" id="235028"/>
<dbReference type="KEGG" id="mmu:235028"/>
<dbReference type="UCSC" id="uc009oiq.2">
    <property type="organism name" value="mouse"/>
</dbReference>
<dbReference type="AGR" id="MGI:1920248"/>
<dbReference type="CTD" id="235028"/>
<dbReference type="MGI" id="MGI:1920248">
    <property type="gene designation" value="Zfp426"/>
</dbReference>
<dbReference type="VEuPathDB" id="HostDB:ENSMUSG00000059475"/>
<dbReference type="eggNOG" id="KOG1721">
    <property type="taxonomic scope" value="Eukaryota"/>
</dbReference>
<dbReference type="GeneTree" id="ENSGT00940000163292"/>
<dbReference type="HOGENOM" id="CLU_002678_0_2_1"/>
<dbReference type="InParanoid" id="Q8R1D1"/>
<dbReference type="OrthoDB" id="3437960at2759"/>
<dbReference type="PhylomeDB" id="Q8R1D1"/>
<dbReference type="Reactome" id="R-MMU-212436">
    <property type="pathway name" value="Generic Transcription Pathway"/>
</dbReference>
<dbReference type="BioGRID-ORCS" id="235028">
    <property type="hits" value="2 hits in 78 CRISPR screens"/>
</dbReference>
<dbReference type="ChiTaRS" id="Zfp426">
    <property type="organism name" value="mouse"/>
</dbReference>
<dbReference type="PRO" id="PR:Q8R1D1"/>
<dbReference type="Proteomes" id="UP000000589">
    <property type="component" value="Chromosome 9"/>
</dbReference>
<dbReference type="RNAct" id="Q8R1D1">
    <property type="molecule type" value="protein"/>
</dbReference>
<dbReference type="Bgee" id="ENSMUSG00000059475">
    <property type="expression patterns" value="Expressed in embryonic brain and 266 other cell types or tissues"/>
</dbReference>
<dbReference type="ExpressionAtlas" id="Q8R1D1">
    <property type="expression patterns" value="baseline and differential"/>
</dbReference>
<dbReference type="GO" id="GO:0005634">
    <property type="term" value="C:nucleus"/>
    <property type="evidence" value="ECO:0007669"/>
    <property type="project" value="UniProtKB-SubCell"/>
</dbReference>
<dbReference type="GO" id="GO:0003677">
    <property type="term" value="F:DNA binding"/>
    <property type="evidence" value="ECO:0007669"/>
    <property type="project" value="UniProtKB-KW"/>
</dbReference>
<dbReference type="GO" id="GO:0008270">
    <property type="term" value="F:zinc ion binding"/>
    <property type="evidence" value="ECO:0007669"/>
    <property type="project" value="UniProtKB-KW"/>
</dbReference>
<dbReference type="GO" id="GO:0006355">
    <property type="term" value="P:regulation of DNA-templated transcription"/>
    <property type="evidence" value="ECO:0007669"/>
    <property type="project" value="InterPro"/>
</dbReference>
<dbReference type="CDD" id="cd07765">
    <property type="entry name" value="KRAB_A-box"/>
    <property type="match status" value="1"/>
</dbReference>
<dbReference type="FunFam" id="3.30.160.60:FF:000097">
    <property type="entry name" value="Zinc finger protein"/>
    <property type="match status" value="1"/>
</dbReference>
<dbReference type="FunFam" id="3.30.160.60:FF:000358">
    <property type="entry name" value="zinc finger protein 24"/>
    <property type="match status" value="1"/>
</dbReference>
<dbReference type="FunFam" id="3.30.160.60:FF:001009">
    <property type="entry name" value="Zinc finger protein 26"/>
    <property type="match status" value="1"/>
</dbReference>
<dbReference type="FunFam" id="3.30.160.60:FF:000184">
    <property type="entry name" value="Zinc finger protein 333"/>
    <property type="match status" value="1"/>
</dbReference>
<dbReference type="FunFam" id="3.30.160.60:FF:000338">
    <property type="entry name" value="zinc finger protein 383"/>
    <property type="match status" value="1"/>
</dbReference>
<dbReference type="FunFam" id="3.30.160.60:FF:001004">
    <property type="entry name" value="Zinc finger protein 426"/>
    <property type="match status" value="1"/>
</dbReference>
<dbReference type="FunFam" id="3.30.160.60:FF:000371">
    <property type="entry name" value="Zinc finger protein 555"/>
    <property type="match status" value="2"/>
</dbReference>
<dbReference type="FunFam" id="3.30.160.60:FF:000156">
    <property type="entry name" value="Zinc finger protein 568"/>
    <property type="match status" value="1"/>
</dbReference>
<dbReference type="FunFam" id="3.30.160.60:FF:001493">
    <property type="entry name" value="zinc finger protein 664"/>
    <property type="match status" value="1"/>
</dbReference>
<dbReference type="FunFam" id="3.30.160.60:FF:000309">
    <property type="entry name" value="zinc finger X-chromosomal protein-like"/>
    <property type="match status" value="1"/>
</dbReference>
<dbReference type="Gene3D" id="6.10.140.140">
    <property type="match status" value="1"/>
</dbReference>
<dbReference type="Gene3D" id="3.30.160.60">
    <property type="entry name" value="Classic Zinc Finger"/>
    <property type="match status" value="11"/>
</dbReference>
<dbReference type="InterPro" id="IPR001909">
    <property type="entry name" value="KRAB"/>
</dbReference>
<dbReference type="InterPro" id="IPR036051">
    <property type="entry name" value="KRAB_dom_sf"/>
</dbReference>
<dbReference type="InterPro" id="IPR050331">
    <property type="entry name" value="Zinc_finger"/>
</dbReference>
<dbReference type="InterPro" id="IPR036236">
    <property type="entry name" value="Znf_C2H2_sf"/>
</dbReference>
<dbReference type="InterPro" id="IPR013087">
    <property type="entry name" value="Znf_C2H2_type"/>
</dbReference>
<dbReference type="PANTHER" id="PTHR16515">
    <property type="entry name" value="PR DOMAIN ZINC FINGER PROTEIN"/>
    <property type="match status" value="1"/>
</dbReference>
<dbReference type="PANTHER" id="PTHR16515:SF51">
    <property type="entry name" value="ZINC FINGER PROTEIN 833-RELATED"/>
    <property type="match status" value="1"/>
</dbReference>
<dbReference type="Pfam" id="PF01352">
    <property type="entry name" value="KRAB"/>
    <property type="match status" value="1"/>
</dbReference>
<dbReference type="Pfam" id="PF00096">
    <property type="entry name" value="zf-C2H2"/>
    <property type="match status" value="8"/>
</dbReference>
<dbReference type="Pfam" id="PF13465">
    <property type="entry name" value="zf-H2C2_2"/>
    <property type="match status" value="1"/>
</dbReference>
<dbReference type="SMART" id="SM00349">
    <property type="entry name" value="KRAB"/>
    <property type="match status" value="1"/>
</dbReference>
<dbReference type="SMART" id="SM00355">
    <property type="entry name" value="ZnF_C2H2"/>
    <property type="match status" value="11"/>
</dbReference>
<dbReference type="SUPFAM" id="SSF57667">
    <property type="entry name" value="beta-beta-alpha zinc fingers"/>
    <property type="match status" value="7"/>
</dbReference>
<dbReference type="SUPFAM" id="SSF109640">
    <property type="entry name" value="KRAB domain (Kruppel-associated box)"/>
    <property type="match status" value="1"/>
</dbReference>
<dbReference type="PROSITE" id="PS50805">
    <property type="entry name" value="KRAB"/>
    <property type="match status" value="1"/>
</dbReference>
<dbReference type="PROSITE" id="PS00028">
    <property type="entry name" value="ZINC_FINGER_C2H2_1"/>
    <property type="match status" value="11"/>
</dbReference>
<dbReference type="PROSITE" id="PS50157">
    <property type="entry name" value="ZINC_FINGER_C2H2_2"/>
    <property type="match status" value="11"/>
</dbReference>
<name>ZN426_MOUSE</name>
<comment type="function">
    <text evidence="3">May be involved in transcriptional regulation.</text>
</comment>
<comment type="subcellular location">
    <subcellularLocation>
        <location evidence="3">Nucleus</location>
    </subcellularLocation>
</comment>
<comment type="sequence caution" evidence="3">
    <conflict type="erroneous initiation">
        <sequence resource="EMBL-CDS" id="BAC29636"/>
    </conflict>
</comment>
<comment type="sequence caution" evidence="3">
    <conflict type="miscellaneous discrepancy">
        <sequence resource="EMBL-CDS" id="BAD90329"/>
    </conflict>
    <text>Exon deletion.</text>
</comment>
<feature type="chain" id="PRO_0000284700" description="Zinc finger protein 426">
    <location>
        <begin position="1"/>
        <end position="550"/>
    </location>
</feature>
<feature type="domain" description="KRAB" evidence="2">
    <location>
        <begin position="39"/>
        <end position="110"/>
    </location>
</feature>
<feature type="zinc finger region" description="C2H2-type 1" evidence="1">
    <location>
        <begin position="219"/>
        <end position="241"/>
    </location>
</feature>
<feature type="zinc finger region" description="C2H2-type 2" evidence="1">
    <location>
        <begin position="274"/>
        <end position="296"/>
    </location>
</feature>
<feature type="zinc finger region" description="C2H2-type 3" evidence="1">
    <location>
        <begin position="302"/>
        <end position="324"/>
    </location>
</feature>
<feature type="zinc finger region" description="C2H2-type 4" evidence="1">
    <location>
        <begin position="330"/>
        <end position="352"/>
    </location>
</feature>
<feature type="zinc finger region" description="C2H2-type 5" evidence="1">
    <location>
        <begin position="358"/>
        <end position="380"/>
    </location>
</feature>
<feature type="zinc finger region" description="C2H2-type 6" evidence="1">
    <location>
        <begin position="386"/>
        <end position="408"/>
    </location>
</feature>
<feature type="zinc finger region" description="C2H2-type 7" evidence="1">
    <location>
        <begin position="414"/>
        <end position="436"/>
    </location>
</feature>
<feature type="zinc finger region" description="C2H2-type 8" evidence="1">
    <location>
        <begin position="442"/>
        <end position="464"/>
    </location>
</feature>
<feature type="zinc finger region" description="C2H2-type 9" evidence="1">
    <location>
        <begin position="470"/>
        <end position="492"/>
    </location>
</feature>
<feature type="zinc finger region" description="C2H2-type 10" evidence="1">
    <location>
        <begin position="498"/>
        <end position="522"/>
    </location>
</feature>
<feature type="zinc finger region" description="C2H2-type 11" evidence="1">
    <location>
        <begin position="528"/>
        <end position="550"/>
    </location>
</feature>
<feature type="sequence conflict" description="In Ref. 2; AAH23931." evidence="3" ref="2">
    <original>R</original>
    <variation>G</variation>
    <location>
        <position position="20"/>
    </location>
</feature>
<feature type="sequence conflict" description="In Ref. 2; AAH23931." evidence="3" ref="2">
    <original>S</original>
    <variation>T</variation>
    <location>
        <position position="54"/>
    </location>
</feature>
<feature type="sequence conflict" description="In Ref. 2; AAH23931." evidence="3" ref="2">
    <location>
        <position position="134"/>
    </location>
</feature>
<feature type="sequence conflict" description="In Ref. 1; BAC29636." evidence="3" ref="1">
    <original>C</original>
    <variation>Y</variation>
    <location>
        <position position="252"/>
    </location>
</feature>
<reference evidence="7" key="1">
    <citation type="journal article" date="2005" name="Science">
        <title>The transcriptional landscape of the mammalian genome.</title>
        <authorList>
            <person name="Carninci P."/>
            <person name="Kasukawa T."/>
            <person name="Katayama S."/>
            <person name="Gough J."/>
            <person name="Frith M.C."/>
            <person name="Maeda N."/>
            <person name="Oyama R."/>
            <person name="Ravasi T."/>
            <person name="Lenhard B."/>
            <person name="Wells C."/>
            <person name="Kodzius R."/>
            <person name="Shimokawa K."/>
            <person name="Bajic V.B."/>
            <person name="Brenner S.E."/>
            <person name="Batalov S."/>
            <person name="Forrest A.R."/>
            <person name="Zavolan M."/>
            <person name="Davis M.J."/>
            <person name="Wilming L.G."/>
            <person name="Aidinis V."/>
            <person name="Allen J.E."/>
            <person name="Ambesi-Impiombato A."/>
            <person name="Apweiler R."/>
            <person name="Aturaliya R.N."/>
            <person name="Bailey T.L."/>
            <person name="Bansal M."/>
            <person name="Baxter L."/>
            <person name="Beisel K.W."/>
            <person name="Bersano T."/>
            <person name="Bono H."/>
            <person name="Chalk A.M."/>
            <person name="Chiu K.P."/>
            <person name="Choudhary V."/>
            <person name="Christoffels A."/>
            <person name="Clutterbuck D.R."/>
            <person name="Crowe M.L."/>
            <person name="Dalla E."/>
            <person name="Dalrymple B.P."/>
            <person name="de Bono B."/>
            <person name="Della Gatta G."/>
            <person name="di Bernardo D."/>
            <person name="Down T."/>
            <person name="Engstrom P."/>
            <person name="Fagiolini M."/>
            <person name="Faulkner G."/>
            <person name="Fletcher C.F."/>
            <person name="Fukushima T."/>
            <person name="Furuno M."/>
            <person name="Futaki S."/>
            <person name="Gariboldi M."/>
            <person name="Georgii-Hemming P."/>
            <person name="Gingeras T.R."/>
            <person name="Gojobori T."/>
            <person name="Green R.E."/>
            <person name="Gustincich S."/>
            <person name="Harbers M."/>
            <person name="Hayashi Y."/>
            <person name="Hensch T.K."/>
            <person name="Hirokawa N."/>
            <person name="Hill D."/>
            <person name="Huminiecki L."/>
            <person name="Iacono M."/>
            <person name="Ikeo K."/>
            <person name="Iwama A."/>
            <person name="Ishikawa T."/>
            <person name="Jakt M."/>
            <person name="Kanapin A."/>
            <person name="Katoh M."/>
            <person name="Kawasawa Y."/>
            <person name="Kelso J."/>
            <person name="Kitamura H."/>
            <person name="Kitano H."/>
            <person name="Kollias G."/>
            <person name="Krishnan S.P."/>
            <person name="Kruger A."/>
            <person name="Kummerfeld S.K."/>
            <person name="Kurochkin I.V."/>
            <person name="Lareau L.F."/>
            <person name="Lazarevic D."/>
            <person name="Lipovich L."/>
            <person name="Liu J."/>
            <person name="Liuni S."/>
            <person name="McWilliam S."/>
            <person name="Madan Babu M."/>
            <person name="Madera M."/>
            <person name="Marchionni L."/>
            <person name="Matsuda H."/>
            <person name="Matsuzawa S."/>
            <person name="Miki H."/>
            <person name="Mignone F."/>
            <person name="Miyake S."/>
            <person name="Morris K."/>
            <person name="Mottagui-Tabar S."/>
            <person name="Mulder N."/>
            <person name="Nakano N."/>
            <person name="Nakauchi H."/>
            <person name="Ng P."/>
            <person name="Nilsson R."/>
            <person name="Nishiguchi S."/>
            <person name="Nishikawa S."/>
            <person name="Nori F."/>
            <person name="Ohara O."/>
            <person name="Okazaki Y."/>
            <person name="Orlando V."/>
            <person name="Pang K.C."/>
            <person name="Pavan W.J."/>
            <person name="Pavesi G."/>
            <person name="Pesole G."/>
            <person name="Petrovsky N."/>
            <person name="Piazza S."/>
            <person name="Reed J."/>
            <person name="Reid J.F."/>
            <person name="Ring B.Z."/>
            <person name="Ringwald M."/>
            <person name="Rost B."/>
            <person name="Ruan Y."/>
            <person name="Salzberg S.L."/>
            <person name="Sandelin A."/>
            <person name="Schneider C."/>
            <person name="Schoenbach C."/>
            <person name="Sekiguchi K."/>
            <person name="Semple C.A."/>
            <person name="Seno S."/>
            <person name="Sessa L."/>
            <person name="Sheng Y."/>
            <person name="Shibata Y."/>
            <person name="Shimada H."/>
            <person name="Shimada K."/>
            <person name="Silva D."/>
            <person name="Sinclair B."/>
            <person name="Sperling S."/>
            <person name="Stupka E."/>
            <person name="Sugiura K."/>
            <person name="Sultana R."/>
            <person name="Takenaka Y."/>
            <person name="Taki K."/>
            <person name="Tammoja K."/>
            <person name="Tan S.L."/>
            <person name="Tang S."/>
            <person name="Taylor M.S."/>
            <person name="Tegner J."/>
            <person name="Teichmann S.A."/>
            <person name="Ueda H.R."/>
            <person name="van Nimwegen E."/>
            <person name="Verardo R."/>
            <person name="Wei C.L."/>
            <person name="Yagi K."/>
            <person name="Yamanishi H."/>
            <person name="Zabarovsky E."/>
            <person name="Zhu S."/>
            <person name="Zimmer A."/>
            <person name="Hide W."/>
            <person name="Bult C."/>
            <person name="Grimmond S.M."/>
            <person name="Teasdale R.D."/>
            <person name="Liu E.T."/>
            <person name="Brusic V."/>
            <person name="Quackenbush J."/>
            <person name="Wahlestedt C."/>
            <person name="Mattick J.S."/>
            <person name="Hume D.A."/>
            <person name="Kai C."/>
            <person name="Sasaki D."/>
            <person name="Tomaru Y."/>
            <person name="Fukuda S."/>
            <person name="Kanamori-Katayama M."/>
            <person name="Suzuki M."/>
            <person name="Aoki J."/>
            <person name="Arakawa T."/>
            <person name="Iida J."/>
            <person name="Imamura K."/>
            <person name="Itoh M."/>
            <person name="Kato T."/>
            <person name="Kawaji H."/>
            <person name="Kawagashira N."/>
            <person name="Kawashima T."/>
            <person name="Kojima M."/>
            <person name="Kondo S."/>
            <person name="Konno H."/>
            <person name="Nakano K."/>
            <person name="Ninomiya N."/>
            <person name="Nishio T."/>
            <person name="Okada M."/>
            <person name="Plessy C."/>
            <person name="Shibata K."/>
            <person name="Shiraki T."/>
            <person name="Suzuki S."/>
            <person name="Tagami M."/>
            <person name="Waki K."/>
            <person name="Watahiki A."/>
            <person name="Okamura-Oho Y."/>
            <person name="Suzuki H."/>
            <person name="Kawai J."/>
            <person name="Hayashizaki Y."/>
        </authorList>
    </citation>
    <scope>NUCLEOTIDE SEQUENCE [LARGE SCALE MRNA]</scope>
    <source>
        <strain evidence="7">C57BL/6J</strain>
        <tissue evidence="7">Lung</tissue>
        <tissue evidence="6">Vagina</tissue>
    </source>
</reference>
<reference evidence="5" key="2">
    <citation type="journal article" date="2004" name="Genome Res.">
        <title>The status, quality, and expansion of the NIH full-length cDNA project: the Mammalian Gene Collection (MGC).</title>
        <authorList>
            <consortium name="The MGC Project Team"/>
        </authorList>
    </citation>
    <scope>NUCLEOTIDE SEQUENCE [LARGE SCALE MRNA]</scope>
    <source>
        <strain>C57BL/6J</strain>
        <strain evidence="4">FVB/N</strain>
        <tissue evidence="4">Mammary gland</tissue>
        <tissue>Retina</tissue>
    </source>
</reference>
<reference evidence="3 8" key="3">
    <citation type="submission" date="2005-02" db="EMBL/GenBank/DDBJ databases">
        <title>Prediction of the coding sequences of mouse homologues of KIAA gene. The complete nucleotide sequences of mouse KIAA-homologous cDNAs identified by screening of terminal sequences of cDNA clones randomly sampled from size-fractionated libraries.</title>
        <authorList>
            <person name="Okazaki N."/>
            <person name="Kikuno R.F."/>
            <person name="Ohara R."/>
            <person name="Inamoto S."/>
            <person name="Nagase T."/>
            <person name="Ohara O."/>
            <person name="Koga H."/>
        </authorList>
    </citation>
    <scope>NUCLEOTIDE SEQUENCE [LARGE SCALE MRNA] OF 36-550</scope>
    <source>
        <tissue evidence="8">Fetal brain</tissue>
    </source>
</reference>
<evidence type="ECO:0000255" key="1">
    <source>
        <dbReference type="PROSITE-ProRule" id="PRU00042"/>
    </source>
</evidence>
<evidence type="ECO:0000255" key="2">
    <source>
        <dbReference type="PROSITE-ProRule" id="PRU00119"/>
    </source>
</evidence>
<evidence type="ECO:0000305" key="3"/>
<evidence type="ECO:0000312" key="4">
    <source>
        <dbReference type="EMBL" id="AAH23931.1"/>
    </source>
</evidence>
<evidence type="ECO:0000312" key="5">
    <source>
        <dbReference type="EMBL" id="AAH24805.1"/>
    </source>
</evidence>
<evidence type="ECO:0000312" key="6">
    <source>
        <dbReference type="EMBL" id="BAC29636.1"/>
    </source>
</evidence>
<evidence type="ECO:0000312" key="7">
    <source>
        <dbReference type="EMBL" id="BAC39374.1"/>
    </source>
</evidence>
<evidence type="ECO:0000312" key="8">
    <source>
        <dbReference type="EMBL" id="BAD90329.1"/>
    </source>
</evidence>
<accession>Q8R1D1</accession>
<accession>Q5DTF7</accession>
<accession>Q8BJ29</accession>
<accession>Q8CIG1</accession>
<keyword id="KW-0238">DNA-binding</keyword>
<keyword id="KW-0479">Metal-binding</keyword>
<keyword id="KW-0539">Nucleus</keyword>
<keyword id="KW-1185">Reference proteome</keyword>
<keyword id="KW-0677">Repeat</keyword>
<keyword id="KW-0804">Transcription</keyword>
<keyword id="KW-0805">Transcription regulation</keyword>
<keyword id="KW-0862">Zinc</keyword>
<keyword id="KW-0863">Zinc-finger</keyword>
<organism>
    <name type="scientific">Mus musculus</name>
    <name type="common">Mouse</name>
    <dbReference type="NCBI Taxonomy" id="10090"/>
    <lineage>
        <taxon>Eukaryota</taxon>
        <taxon>Metazoa</taxon>
        <taxon>Chordata</taxon>
        <taxon>Craniata</taxon>
        <taxon>Vertebrata</taxon>
        <taxon>Euteleostomi</taxon>
        <taxon>Mammalia</taxon>
        <taxon>Eutheria</taxon>
        <taxon>Euarchontoglires</taxon>
        <taxon>Glires</taxon>
        <taxon>Rodentia</taxon>
        <taxon>Myomorpha</taxon>
        <taxon>Muroidea</taxon>
        <taxon>Muridae</taxon>
        <taxon>Murinae</taxon>
        <taxon>Mus</taxon>
        <taxon>Mus</taxon>
    </lineage>
</organism>
<proteinExistence type="evidence at transcript level"/>
<protein>
    <recommendedName>
        <fullName>Zinc finger protein 426</fullName>
    </recommendedName>
</protein>
<gene>
    <name type="primary">Znf426</name>
    <name evidence="8" type="synonym">Kiaa4237</name>
    <name type="synonym">Zfp426</name>
</gene>
<sequence length="550" mass="63020">MAAPASSHGPSEDSGCLQERKIAAEMMLVDCLTDDQELVSFEDVIVDFTQEEWSSLNPDQRNLYRDVMLENYQNLATVGYQLIKPSLISWLEQEEFSKGQKIVFPEWKLQLETKCSAFQQEFLRGNISSRMQMQTGINRGRELCDGTQYGDFFSELSPLRTDMKTQPAQDNYGCSQYRKDFLMLQRKNCAGEKLSEFSQSEETGMTPVKEKIDTQEKGFECSDCGKSFMSQSHLQTHQRTHSGDKLYEWNECGRSFINSRLAVLIETLNAKKPHRCKECGKGYRYPAYLNIHMRTHTGEKPYECKECGKAFNYSNSFQIHGRTHTGEKPYVCSQCGKAFTQHSGLSIHVRSHTGDKPYGCKECGKAFLTSSRLIQHIRTHTGEKPFVCVKCGKAFAISSNLNGHLKLHAEEKTCECKICGKAFGYLSCLNNHMRTHNAKKSYTCKECGKAFNYSTHLKIHMRIHTGEKPYECKQCGKAFSHSTSFQIHERTHTGEKPYECKECGKAFICPSSFRIHEISHTHTEEKPYKCQQCGKAYSHPRSLRRHERIH</sequence>